<proteinExistence type="evidence at transcript level"/>
<feature type="chain" id="PRO_0000371221" description="Protein argonaute-2">
    <location>
        <begin position="1"/>
        <end position="871"/>
    </location>
</feature>
<feature type="domain" description="PAZ" evidence="4">
    <location>
        <begin position="232"/>
        <end position="351"/>
    </location>
</feature>
<feature type="domain" description="Piwi" evidence="3">
    <location>
        <begin position="529"/>
        <end position="830"/>
    </location>
</feature>
<feature type="region of interest" description="Interaction with guide RNA" evidence="1">
    <location>
        <begin position="314"/>
        <end position="319"/>
    </location>
</feature>
<feature type="region of interest" description="Interaction with guide RNA" evidence="1">
    <location>
        <begin position="536"/>
        <end position="578"/>
    </location>
</feature>
<feature type="region of interest" description="Interaction with GW182 family members" evidence="2">
    <location>
        <begin position="599"/>
        <end position="602"/>
    </location>
</feature>
<feature type="region of interest" description="Interaction with GW182 family members" evidence="2">
    <location>
        <begin position="662"/>
        <end position="672"/>
    </location>
</feature>
<feature type="region of interest" description="Interaction with guide RNA" evidence="1">
    <location>
        <begin position="721"/>
        <end position="722"/>
    </location>
</feature>
<feature type="region of interest" description="Interaction with guide RNA" evidence="1">
    <location>
        <begin position="765"/>
        <end position="773"/>
    </location>
</feature>
<feature type="region of interest" description="Interaction with guide RNA" evidence="1">
    <location>
        <begin position="802"/>
        <end position="824"/>
    </location>
</feature>
<feature type="region of interest" description="Disordered" evidence="5">
    <location>
        <begin position="834"/>
        <end position="856"/>
    </location>
</feature>
<feature type="compositionally biased region" description="Polar residues" evidence="5">
    <location>
        <begin position="839"/>
        <end position="850"/>
    </location>
</feature>
<feature type="binding site" evidence="3">
    <location>
        <position position="609"/>
    </location>
    <ligand>
        <name>a divalent metal cation</name>
        <dbReference type="ChEBI" id="CHEBI:60240"/>
    </ligand>
</feature>
<feature type="binding site" evidence="3">
    <location>
        <position position="681"/>
    </location>
    <ligand>
        <name>a divalent metal cation</name>
        <dbReference type="ChEBI" id="CHEBI:60240"/>
    </ligand>
</feature>
<feature type="binding site" evidence="3">
    <location>
        <position position="819"/>
    </location>
    <ligand>
        <name>a divalent metal cation</name>
        <dbReference type="ChEBI" id="CHEBI:60240"/>
    </ligand>
</feature>
<keyword id="KW-0963">Cytoplasm</keyword>
<keyword id="KW-0255">Endonuclease</keyword>
<keyword id="KW-0378">Hydrolase</keyword>
<keyword id="KW-0460">Magnesium</keyword>
<keyword id="KW-0464">Manganese</keyword>
<keyword id="KW-0479">Metal-binding</keyword>
<keyword id="KW-0540">Nuclease</keyword>
<keyword id="KW-1185">Reference proteome</keyword>
<keyword id="KW-0687">Ribonucleoprotein</keyword>
<keyword id="KW-0694">RNA-binding</keyword>
<keyword id="KW-0943">RNA-mediated gene silencing</keyword>
<keyword id="KW-0810">Translation regulation</keyword>
<protein>
    <recommendedName>
        <fullName evidence="3">Protein argonaute-2</fullName>
        <shortName evidence="3">Argonaute2</shortName>
        <ecNumber evidence="3">3.1.26.n2</ecNumber>
    </recommendedName>
    <alternativeName>
        <fullName>Argonaute RISC catalytic component 2</fullName>
    </alternativeName>
    <alternativeName>
        <fullName evidence="3">Eukaryotic translation initiation factor 2C 2</fullName>
        <shortName evidence="3">eIF-2C 2</shortName>
        <shortName evidence="3">eIF2C 2</shortName>
    </alternativeName>
    <alternativeName>
        <fullName evidence="3">Protein slicer</fullName>
    </alternativeName>
</protein>
<dbReference type="EC" id="3.1.26.n2" evidence="3"/>
<dbReference type="EMBL" id="BC075263">
    <property type="protein sequence ID" value="AAH75263.1"/>
    <property type="molecule type" value="mRNA"/>
</dbReference>
<dbReference type="RefSeq" id="NP_001004877.1">
    <property type="nucleotide sequence ID" value="NM_001004877.1"/>
</dbReference>
<dbReference type="SMR" id="Q6DJB9"/>
<dbReference type="FunCoup" id="Q6DJB9">
    <property type="interactions" value="2141"/>
</dbReference>
<dbReference type="STRING" id="8364.ENSXETP00000054507"/>
<dbReference type="PaxDb" id="8364-ENSXETP00000051244"/>
<dbReference type="GeneID" id="448205"/>
<dbReference type="KEGG" id="xtr:448205"/>
<dbReference type="AGR" id="Xenbase:XB-GENE-1001916"/>
<dbReference type="CTD" id="27161"/>
<dbReference type="Xenbase" id="XB-GENE-1001916">
    <property type="gene designation" value="ago2"/>
</dbReference>
<dbReference type="eggNOG" id="KOG1041">
    <property type="taxonomic scope" value="Eukaryota"/>
</dbReference>
<dbReference type="HOGENOM" id="CLU_004544_4_3_1"/>
<dbReference type="InParanoid" id="Q6DJB9"/>
<dbReference type="OMA" id="CFAQQQH"/>
<dbReference type="OrthoDB" id="10252740at2759"/>
<dbReference type="Reactome" id="R-XTR-203927">
    <property type="pathway name" value="MicroRNA (miRNA) biogenesis"/>
</dbReference>
<dbReference type="Reactome" id="R-XTR-426486">
    <property type="pathway name" value="Small interfering RNA (siRNA) biogenesis"/>
</dbReference>
<dbReference type="Reactome" id="R-XTR-426496">
    <property type="pathway name" value="Post-transcriptional silencing by small RNAs"/>
</dbReference>
<dbReference type="Reactome" id="R-XTR-5578749">
    <property type="pathway name" value="Transcriptional regulation by small RNAs"/>
</dbReference>
<dbReference type="Proteomes" id="UP000008143">
    <property type="component" value="Chromosome 6"/>
</dbReference>
<dbReference type="Bgee" id="ENSXETG00000023755">
    <property type="expression patterns" value="Expressed in neurula embryo and 16 other cell types or tissues"/>
</dbReference>
<dbReference type="GO" id="GO:0000932">
    <property type="term" value="C:P-body"/>
    <property type="evidence" value="ECO:0007669"/>
    <property type="project" value="UniProtKB-SubCell"/>
</dbReference>
<dbReference type="GO" id="GO:0016442">
    <property type="term" value="C:RISC complex"/>
    <property type="evidence" value="ECO:0000250"/>
    <property type="project" value="UniProtKB"/>
</dbReference>
<dbReference type="GO" id="GO:0070578">
    <property type="term" value="C:RISC-loading complex"/>
    <property type="evidence" value="ECO:0000250"/>
    <property type="project" value="UniProtKB"/>
</dbReference>
<dbReference type="GO" id="GO:0070551">
    <property type="term" value="F:endoribonuclease activity, cleaving siRNA-paired mRNA"/>
    <property type="evidence" value="ECO:0000250"/>
    <property type="project" value="UniProtKB"/>
</dbReference>
<dbReference type="GO" id="GO:0046872">
    <property type="term" value="F:metal ion binding"/>
    <property type="evidence" value="ECO:0007669"/>
    <property type="project" value="UniProtKB-KW"/>
</dbReference>
<dbReference type="GO" id="GO:0035198">
    <property type="term" value="F:miRNA binding"/>
    <property type="evidence" value="ECO:0007669"/>
    <property type="project" value="UniProtKB-UniRule"/>
</dbReference>
<dbReference type="GO" id="GO:0098808">
    <property type="term" value="F:mRNA cap binding"/>
    <property type="evidence" value="ECO:0000250"/>
    <property type="project" value="UniProtKB"/>
</dbReference>
<dbReference type="GO" id="GO:0000340">
    <property type="term" value="F:RNA 7-methylguanosine cap binding"/>
    <property type="evidence" value="ECO:0000250"/>
    <property type="project" value="UniProtKB"/>
</dbReference>
<dbReference type="GO" id="GO:0035197">
    <property type="term" value="F:siRNA binding"/>
    <property type="evidence" value="ECO:0000250"/>
    <property type="project" value="UniProtKB"/>
</dbReference>
<dbReference type="GO" id="GO:0035278">
    <property type="term" value="P:miRNA-mediated gene silencing by inhibition of translation"/>
    <property type="evidence" value="ECO:0000250"/>
    <property type="project" value="UniProtKB"/>
</dbReference>
<dbReference type="GO" id="GO:0035279">
    <property type="term" value="P:miRNA-mediated gene silencing by mRNA destabilization"/>
    <property type="evidence" value="ECO:0000250"/>
    <property type="project" value="UniProtKB"/>
</dbReference>
<dbReference type="GO" id="GO:0045947">
    <property type="term" value="P:negative regulation of translational initiation"/>
    <property type="evidence" value="ECO:0000250"/>
    <property type="project" value="UniProtKB"/>
</dbReference>
<dbReference type="GO" id="GO:1900153">
    <property type="term" value="P:positive regulation of nuclear-transcribed mRNA catabolic process, deadenylation-dependent decay"/>
    <property type="evidence" value="ECO:0000250"/>
    <property type="project" value="UniProtKB"/>
</dbReference>
<dbReference type="GO" id="GO:0060213">
    <property type="term" value="P:positive regulation of nuclear-transcribed mRNA poly(A) tail shortening"/>
    <property type="evidence" value="ECO:0000250"/>
    <property type="project" value="UniProtKB"/>
</dbReference>
<dbReference type="GO" id="GO:0031054">
    <property type="term" value="P:pre-miRNA processing"/>
    <property type="evidence" value="ECO:0000250"/>
    <property type="project" value="UniProtKB"/>
</dbReference>
<dbReference type="GO" id="GO:0006355">
    <property type="term" value="P:regulation of DNA-templated transcription"/>
    <property type="evidence" value="ECO:0007669"/>
    <property type="project" value="InterPro"/>
</dbReference>
<dbReference type="GO" id="GO:0031047">
    <property type="term" value="P:regulatory ncRNA-mediated gene silencing"/>
    <property type="evidence" value="ECO:0000250"/>
    <property type="project" value="UniProtKB"/>
</dbReference>
<dbReference type="CDD" id="cd02846">
    <property type="entry name" value="PAZ_argonaute_like"/>
    <property type="match status" value="1"/>
</dbReference>
<dbReference type="CDD" id="cd04657">
    <property type="entry name" value="Piwi_ago-like"/>
    <property type="match status" value="1"/>
</dbReference>
<dbReference type="FunFam" id="2.170.260.10:FF:000001">
    <property type="entry name" value="Protein argonaute-2"/>
    <property type="match status" value="1"/>
</dbReference>
<dbReference type="FunFam" id="3.30.420.10:FF:000001">
    <property type="entry name" value="Protein argonaute-2"/>
    <property type="match status" value="1"/>
</dbReference>
<dbReference type="FunFam" id="3.40.50.2300:FF:000005">
    <property type="entry name" value="Protein argonaute-2"/>
    <property type="match status" value="1"/>
</dbReference>
<dbReference type="Gene3D" id="3.40.50.2300">
    <property type="match status" value="1"/>
</dbReference>
<dbReference type="Gene3D" id="2.170.260.10">
    <property type="entry name" value="paz domain"/>
    <property type="match status" value="1"/>
</dbReference>
<dbReference type="Gene3D" id="3.30.420.10">
    <property type="entry name" value="Ribonuclease H-like superfamily/Ribonuclease H"/>
    <property type="match status" value="1"/>
</dbReference>
<dbReference type="HAMAP" id="MF_03031">
    <property type="entry name" value="AGO2"/>
    <property type="match status" value="1"/>
</dbReference>
<dbReference type="InterPro" id="IPR028602">
    <property type="entry name" value="AGO2"/>
</dbReference>
<dbReference type="InterPro" id="IPR014811">
    <property type="entry name" value="ArgoL1"/>
</dbReference>
<dbReference type="InterPro" id="IPR032472">
    <property type="entry name" value="ArgoL2"/>
</dbReference>
<dbReference type="InterPro" id="IPR032473">
    <property type="entry name" value="Argonaute_Mid_dom"/>
</dbReference>
<dbReference type="InterPro" id="IPR032474">
    <property type="entry name" value="Argonaute_N"/>
</dbReference>
<dbReference type="InterPro" id="IPR003100">
    <property type="entry name" value="PAZ_dom"/>
</dbReference>
<dbReference type="InterPro" id="IPR036085">
    <property type="entry name" value="PAZ_dom_sf"/>
</dbReference>
<dbReference type="InterPro" id="IPR003165">
    <property type="entry name" value="Piwi"/>
</dbReference>
<dbReference type="InterPro" id="IPR045246">
    <property type="entry name" value="Piwi_ago-like"/>
</dbReference>
<dbReference type="InterPro" id="IPR012337">
    <property type="entry name" value="RNaseH-like_sf"/>
</dbReference>
<dbReference type="InterPro" id="IPR036397">
    <property type="entry name" value="RNaseH_sf"/>
</dbReference>
<dbReference type="PANTHER" id="PTHR22891">
    <property type="entry name" value="EUKARYOTIC TRANSLATION INITIATION FACTOR 2C"/>
    <property type="match status" value="1"/>
</dbReference>
<dbReference type="Pfam" id="PF08699">
    <property type="entry name" value="ArgoL1"/>
    <property type="match status" value="1"/>
</dbReference>
<dbReference type="Pfam" id="PF16488">
    <property type="entry name" value="ArgoL2"/>
    <property type="match status" value="1"/>
</dbReference>
<dbReference type="Pfam" id="PF16487">
    <property type="entry name" value="ArgoMid"/>
    <property type="match status" value="1"/>
</dbReference>
<dbReference type="Pfam" id="PF16486">
    <property type="entry name" value="ArgoN"/>
    <property type="match status" value="1"/>
</dbReference>
<dbReference type="Pfam" id="PF02170">
    <property type="entry name" value="PAZ"/>
    <property type="match status" value="1"/>
</dbReference>
<dbReference type="Pfam" id="PF02171">
    <property type="entry name" value="Piwi"/>
    <property type="match status" value="1"/>
</dbReference>
<dbReference type="SMART" id="SM01163">
    <property type="entry name" value="DUF1785"/>
    <property type="match status" value="1"/>
</dbReference>
<dbReference type="SMART" id="SM00949">
    <property type="entry name" value="PAZ"/>
    <property type="match status" value="1"/>
</dbReference>
<dbReference type="SMART" id="SM00950">
    <property type="entry name" value="Piwi"/>
    <property type="match status" value="1"/>
</dbReference>
<dbReference type="SUPFAM" id="SSF101690">
    <property type="entry name" value="PAZ domain"/>
    <property type="match status" value="1"/>
</dbReference>
<dbReference type="SUPFAM" id="SSF53098">
    <property type="entry name" value="Ribonuclease H-like"/>
    <property type="match status" value="1"/>
</dbReference>
<dbReference type="PROSITE" id="PS50821">
    <property type="entry name" value="PAZ"/>
    <property type="match status" value="1"/>
</dbReference>
<dbReference type="PROSITE" id="PS50822">
    <property type="entry name" value="PIWI"/>
    <property type="match status" value="1"/>
</dbReference>
<accession>Q6DJB9</accession>
<organism>
    <name type="scientific">Xenopus tropicalis</name>
    <name type="common">Western clawed frog</name>
    <name type="synonym">Silurana tropicalis</name>
    <dbReference type="NCBI Taxonomy" id="8364"/>
    <lineage>
        <taxon>Eukaryota</taxon>
        <taxon>Metazoa</taxon>
        <taxon>Chordata</taxon>
        <taxon>Craniata</taxon>
        <taxon>Vertebrata</taxon>
        <taxon>Euteleostomi</taxon>
        <taxon>Amphibia</taxon>
        <taxon>Batrachia</taxon>
        <taxon>Anura</taxon>
        <taxon>Pipoidea</taxon>
        <taxon>Pipidae</taxon>
        <taxon>Xenopodinae</taxon>
        <taxon>Xenopus</taxon>
        <taxon>Silurana</taxon>
    </lineage>
</organism>
<evidence type="ECO:0000250" key="1"/>
<evidence type="ECO:0000255" key="2"/>
<evidence type="ECO:0000255" key="3">
    <source>
        <dbReference type="HAMAP-Rule" id="MF_03031"/>
    </source>
</evidence>
<evidence type="ECO:0000255" key="4">
    <source>
        <dbReference type="PROSITE-ProRule" id="PRU00142"/>
    </source>
</evidence>
<evidence type="ECO:0000256" key="5">
    <source>
        <dbReference type="SAM" id="MobiDB-lite"/>
    </source>
</evidence>
<comment type="function">
    <text evidence="3">Required for RNA-mediated gene silencing (RNAi) by the RNA-induced silencing complex (RISC). The 'minimal RISC' appears to include ago2 bound to a short guide RNA such as a microRNA (miRNA) or short interfering RNA (siRNA). These guide RNAs direct RISC to complementary mRNAs that are targets for RISC-mediated gene silencing. The precise mechanism of gene silencing depends on the degree of complementarity between the miRNA or siRNA and its target. Binding of RISC to a perfectly complementary mRNA generally results in silencing due to endonucleolytic cleavage of the mRNA specifically by ago2. Binding of RISC to a partially complementary mRNA results in silencing through inhibition of translation, and this is independent of endonuclease activity. The inhibition of translational initiation leads to the accumulation of the affected mRNA in cytoplasmic processing bodies (P-bodies), where mRNA degradation may subsequently occur.</text>
</comment>
<comment type="catalytic activity">
    <reaction evidence="3">
        <text>Endonucleolytic cleavage to 5'-phosphomonoester.</text>
        <dbReference type="EC" id="3.1.26.n2"/>
    </reaction>
</comment>
<comment type="cofactor">
    <cofactor evidence="1">
        <name>Mg(2+)</name>
        <dbReference type="ChEBI" id="CHEBI:18420"/>
    </cofactor>
    <cofactor evidence="1">
        <name>Mn(2+)</name>
        <dbReference type="ChEBI" id="CHEBI:29035"/>
    </cofactor>
</comment>
<comment type="subunit">
    <text evidence="3">Component of the RISC loading complex (RLC), or micro-RNA (miRNA) loading complex (miRLC), which is composed of dicer1, ago2 and tarbp2. Note that the trimeric RLC/miRLC is also referred to as RISC.</text>
</comment>
<comment type="subcellular location">
    <subcellularLocation>
        <location evidence="3">Cytoplasm</location>
        <location evidence="3">P-body</location>
    </subcellularLocation>
</comment>
<comment type="domain">
    <text evidence="3">The Piwi domain may perform RNA cleavage by a mechanism similar to that of RNase H. However, while RNase H utilizes a triad of Asp-Asp-Glu (DDE) for metal ion coordination, this protein appears to utilize a triad of Asp-Asp-His (DDH).</text>
</comment>
<comment type="similarity">
    <text evidence="3">Belongs to the argonaute family. Ago subfamily.</text>
</comment>
<sequence length="871" mass="98737">MYAGAGPVLVPPTPTPPLPMPAYTFKPPPRPDFGTSGRTIKLQANFFEMDIPKIEIYHYEIDIKPEKCPRRVNREIVEHMVQHFKAQIFGDRKPVFDGRKNLYTAMPLPIARDKQVELEVTLPGEGKDRIFKVAIKWMACVSLQALHDALSGRLPSVPFETIQALDVVMRHLPSMRYTPVGRSFFTASEGCANPLGGGREVWFGFHQSVRPSLWKMMLNIDVSATAFYKAQPVIEFMCEVLDFKSIEEQQKPLTDSQRVKFTKEIKGLKVEITHCGQMKRKYRVCNVTRRPASHQTFPLQQESGQTVECTVAQYFKDRHKLVLRYPHLPCLQVGQEQKHTYLPLEVCNIVAGQRCIKKLTDNQTSTMIRATARSAPDRQEEISKLMRSASFNTDPFVREFGIMVKDDMTDVTGRVLQPPSILYGGRVWEEPNAPLNKAIATPVQGVWDMRNKQFHTGIEIKVWAIACFAPQRQCTEVHLKTFTEQLRKISRDAGMPIQGQPCFCKYAQGADSVEPMFRHLKNTYTGLQLVVVILPGKTPVYAEVKRVGDTVLGMATQCVQMKNVQRTTPQTLSNLCLKINVKLGGVNNILLPQGRPPVFQQPVIFLGADVTHPPAGDGKKPSIAAVVGSMDAHPNRYCATVRVQQHRQEIIQDLSAMVRELLIQFYKSTRFKPTRIIFYRDGVSEGQFQQVLHHELLAIREACIKLEKDYQPGITFIVVQKRHHTRLFCTDRNERVGKSGNIPAGTTVDTKITHPSEFDFYLCSHAGIQGTSRPSHYHVLWDDNRFSSDELQILTYQLCHTYVRCTRSVSIPAPAYYAHLVAFRARYHLVDKEHDSAEGSHTSGQSNGRDQQALAKAVQVHQDTLRTMYFA</sequence>
<reference key="1">
    <citation type="submission" date="2004-06" db="EMBL/GenBank/DDBJ databases">
        <authorList>
            <consortium name="NIH - Xenopus Gene Collection (XGC) project"/>
        </authorList>
    </citation>
    <scope>NUCLEOTIDE SEQUENCE [LARGE SCALE MRNA]</scope>
</reference>
<gene>
    <name type="primary">ago2</name>
    <name type="synonym">eif2c2</name>
</gene>
<name>AGO2_XENTR</name>